<sequence>MELLEKFISQDINNNFLHYLNFKDNGSKKYITNQLIFLEKLFDIPYGNLFLFTKMFDNKVWEIPTNELSEGLVRLFDRLELTKINELAAGNGLLSARLKYYSEKLNTNLKIKTSDGSSKNFGNHEFTYIKVSESDISDFDKSGPIIISWIHRFFEHELLSYVKKHNNEYIFLIGEHPDSTDYGNNHSMYFHNKMYSFGYQHQIIEFQQISQMDYYCYDKIRNDIYNENKTCVVLYYKTHLHSKVTNIINTLKQNHPKLFGKFLNKNKKYYDQDKILLEISKNKINEYFSYCHDDLCLLLTDRYKKLVESSLMDNDDSDSEISHKTIQLSNIIKMMYCGLTKVNLIRPIISCSISNCNSEQSLSRIVRHNENKPTTIILNSVKNNNSVISHSVDDKLSQRYGKKGTIGFSIKRQEYEQENKYTSPFINGSSIPTRMIIRDITERIFAEIMHIKSNINI</sequence>
<gene>
    <name type="ordered locus">MIMI_R839</name>
</gene>
<organism>
    <name type="scientific">Acanthamoeba polyphaga mimivirus</name>
    <name type="common">APMV</name>
    <dbReference type="NCBI Taxonomy" id="212035"/>
    <lineage>
        <taxon>Viruses</taxon>
        <taxon>Varidnaviria</taxon>
        <taxon>Bamfordvirae</taxon>
        <taxon>Nucleocytoviricota</taxon>
        <taxon>Megaviricetes</taxon>
        <taxon>Imitervirales</taxon>
        <taxon>Mimiviridae</taxon>
        <taxon>Megamimivirinae</taxon>
        <taxon>Mimivirus</taxon>
        <taxon>Mimivirus bradfordmassiliense</taxon>
    </lineage>
</organism>
<keyword id="KW-1185">Reference proteome</keyword>
<feature type="chain" id="PRO_0000247414" description="Uncharacterized protein R839">
    <location>
        <begin position="1"/>
        <end position="457"/>
    </location>
</feature>
<accession>Q5UQI6</accession>
<organismHost>
    <name type="scientific">Acanthamoeba polyphaga</name>
    <name type="common">Amoeba</name>
    <dbReference type="NCBI Taxonomy" id="5757"/>
</organismHost>
<proteinExistence type="predicted"/>
<dbReference type="EMBL" id="AY653733">
    <property type="protein sequence ID" value="AAV51097.1"/>
    <property type="molecule type" value="Genomic_DNA"/>
</dbReference>
<dbReference type="KEGG" id="vg:9925502"/>
<dbReference type="Proteomes" id="UP000001134">
    <property type="component" value="Genome"/>
</dbReference>
<name>YR839_MIMIV</name>
<reference key="1">
    <citation type="journal article" date="2004" name="Science">
        <title>The 1.2-megabase genome sequence of Mimivirus.</title>
        <authorList>
            <person name="Raoult D."/>
            <person name="Audic S."/>
            <person name="Robert C."/>
            <person name="Abergel C."/>
            <person name="Renesto P."/>
            <person name="Ogata H."/>
            <person name="La Scola B."/>
            <person name="Susan M."/>
            <person name="Claverie J.-M."/>
        </authorList>
    </citation>
    <scope>NUCLEOTIDE SEQUENCE [LARGE SCALE GENOMIC DNA]</scope>
    <source>
        <strain>Rowbotham-Bradford</strain>
    </source>
</reference>
<protein>
    <recommendedName>
        <fullName>Uncharacterized protein R839</fullName>
    </recommendedName>
</protein>